<dbReference type="EMBL" id="AK292735">
    <property type="protein sequence ID" value="BAF85424.1"/>
    <property type="molecule type" value="mRNA"/>
</dbReference>
<dbReference type="EMBL" id="AL080317">
    <property type="status" value="NOT_ANNOTATED_CDS"/>
    <property type="molecule type" value="Genomic_DNA"/>
</dbReference>
<dbReference type="EMBL" id="CH471051">
    <property type="protein sequence ID" value="EAW48296.1"/>
    <property type="molecule type" value="Genomic_DNA"/>
</dbReference>
<dbReference type="EMBL" id="BC036115">
    <property type="protein sequence ID" value="AAH36115.1"/>
    <property type="molecule type" value="mRNA"/>
</dbReference>
<dbReference type="EMBL" id="AB067506">
    <property type="protein sequence ID" value="BAB67812.1"/>
    <property type="molecule type" value="mRNA"/>
</dbReference>
<dbReference type="EMBL" id="AF161363">
    <property type="protein sequence ID" value="AAF28923.1"/>
    <property type="molecule type" value="mRNA"/>
</dbReference>
<dbReference type="CCDS" id="CCDS5090.1"/>
<dbReference type="RefSeq" id="NP_699200.2">
    <property type="nucleotide sequence ID" value="NM_153369.4"/>
</dbReference>
<dbReference type="SMR" id="Q5TF39"/>
<dbReference type="BioGRID" id="124873">
    <property type="interactions" value="22"/>
</dbReference>
<dbReference type="FunCoup" id="Q5TF39">
    <property type="interactions" value="261"/>
</dbReference>
<dbReference type="IntAct" id="Q5TF39">
    <property type="interactions" value="17"/>
</dbReference>
<dbReference type="STRING" id="9606.ENSP00000500934"/>
<dbReference type="TCDB" id="2.A.1.7.27">
    <property type="family name" value="the major facilitator superfamily (mfs)"/>
</dbReference>
<dbReference type="GlyGen" id="Q5TF39">
    <property type="glycosylation" value="1 site"/>
</dbReference>
<dbReference type="iPTMnet" id="Q5TF39"/>
<dbReference type="PhosphoSitePlus" id="Q5TF39"/>
<dbReference type="BioMuta" id="MFSD4B"/>
<dbReference type="DMDM" id="74746358"/>
<dbReference type="jPOST" id="Q5TF39"/>
<dbReference type="MassIVE" id="Q5TF39"/>
<dbReference type="PaxDb" id="9606-ENSP00000357840"/>
<dbReference type="PeptideAtlas" id="Q5TF39"/>
<dbReference type="ProteomicsDB" id="65070"/>
<dbReference type="Antibodypedia" id="32375">
    <property type="antibodies" value="26 antibodies from 14 providers"/>
</dbReference>
<dbReference type="DNASU" id="91749"/>
<dbReference type="Ensembl" id="ENST00000671876.2">
    <property type="protein sequence ID" value="ENSP00000500934.1"/>
    <property type="gene ID" value="ENSG00000173214.7"/>
</dbReference>
<dbReference type="Ensembl" id="ENST00000671883.1">
    <property type="protein sequence ID" value="ENSP00000499903.1"/>
    <property type="gene ID" value="ENSG00000173214.7"/>
</dbReference>
<dbReference type="Ensembl" id="ENST00000672191.1">
    <property type="protein sequence ID" value="ENSP00000500175.1"/>
    <property type="gene ID" value="ENSG00000173214.7"/>
</dbReference>
<dbReference type="Ensembl" id="ENST00000672750.1">
    <property type="protein sequence ID" value="ENSP00000500686.1"/>
    <property type="gene ID" value="ENSG00000173214.7"/>
</dbReference>
<dbReference type="GeneID" id="91749"/>
<dbReference type="KEGG" id="hsa:91749"/>
<dbReference type="MANE-Select" id="ENST00000671876.2">
    <property type="protein sequence ID" value="ENSP00000500934.1"/>
    <property type="RefSeq nucleotide sequence ID" value="NM_153369.4"/>
    <property type="RefSeq protein sequence ID" value="NP_699200.2"/>
</dbReference>
<dbReference type="UCSC" id="uc003puv.5">
    <property type="organism name" value="human"/>
</dbReference>
<dbReference type="AGR" id="HGNC:21053"/>
<dbReference type="CTD" id="91749"/>
<dbReference type="DisGeNET" id="91749"/>
<dbReference type="GeneCards" id="MFSD4B"/>
<dbReference type="HGNC" id="HGNC:21053">
    <property type="gene designation" value="MFSD4B"/>
</dbReference>
<dbReference type="HPA" id="ENSG00000173214">
    <property type="expression patterns" value="Low tissue specificity"/>
</dbReference>
<dbReference type="MIM" id="617331">
    <property type="type" value="gene"/>
</dbReference>
<dbReference type="neXtProt" id="NX_Q5TF39"/>
<dbReference type="OpenTargets" id="ENSG00000173214"/>
<dbReference type="PharmGKB" id="PA128394744"/>
<dbReference type="VEuPathDB" id="HostDB:ENSG00000173214"/>
<dbReference type="eggNOG" id="ENOG502R5UW">
    <property type="taxonomic scope" value="Eukaryota"/>
</dbReference>
<dbReference type="GeneTree" id="ENSGT00530000063320"/>
<dbReference type="HOGENOM" id="CLU_028923_1_0_1"/>
<dbReference type="InParanoid" id="Q5TF39"/>
<dbReference type="OMA" id="IPWCKKA"/>
<dbReference type="OrthoDB" id="546893at2759"/>
<dbReference type="PAN-GO" id="Q5TF39">
    <property type="GO annotations" value="1 GO annotation based on evolutionary models"/>
</dbReference>
<dbReference type="PhylomeDB" id="Q5TF39"/>
<dbReference type="TreeFam" id="TF314613"/>
<dbReference type="PathwayCommons" id="Q5TF39"/>
<dbReference type="Reactome" id="R-HSA-189200">
    <property type="pathway name" value="Cellular hexose transport"/>
</dbReference>
<dbReference type="SignaLink" id="Q5TF39"/>
<dbReference type="BioGRID-ORCS" id="91749">
    <property type="hits" value="6 hits in 1136 CRISPR screens"/>
</dbReference>
<dbReference type="ChiTaRS" id="MFSD4B">
    <property type="organism name" value="human"/>
</dbReference>
<dbReference type="GenomeRNAi" id="91749"/>
<dbReference type="Pharos" id="Q5TF39">
    <property type="development level" value="Tdark"/>
</dbReference>
<dbReference type="PRO" id="PR:Q5TF39"/>
<dbReference type="Proteomes" id="UP000005640">
    <property type="component" value="Chromosome 6"/>
</dbReference>
<dbReference type="RNAct" id="Q5TF39">
    <property type="molecule type" value="protein"/>
</dbReference>
<dbReference type="Bgee" id="ENSG00000173214">
    <property type="expression patterns" value="Expressed in renal medulla and 184 other cell types or tissues"/>
</dbReference>
<dbReference type="ExpressionAtlas" id="Q5TF39">
    <property type="expression patterns" value="baseline and differential"/>
</dbReference>
<dbReference type="GO" id="GO:0016324">
    <property type="term" value="C:apical plasma membrane"/>
    <property type="evidence" value="ECO:0007669"/>
    <property type="project" value="UniProtKB-SubCell"/>
</dbReference>
<dbReference type="GO" id="GO:0015293">
    <property type="term" value="F:symporter activity"/>
    <property type="evidence" value="ECO:0007669"/>
    <property type="project" value="UniProtKB-KW"/>
</dbReference>
<dbReference type="GO" id="GO:0006814">
    <property type="term" value="P:sodium ion transport"/>
    <property type="evidence" value="ECO:0007669"/>
    <property type="project" value="UniProtKB-KW"/>
</dbReference>
<dbReference type="CDD" id="cd17454">
    <property type="entry name" value="MFS_NaGLT1_MFSD4B"/>
    <property type="match status" value="1"/>
</dbReference>
<dbReference type="FunFam" id="1.20.1250.20:FF:000367">
    <property type="entry name" value="Major facilitator superfamily domain containing 4B"/>
    <property type="match status" value="1"/>
</dbReference>
<dbReference type="Gene3D" id="1.20.1250.20">
    <property type="entry name" value="MFS general substrate transporter like domains"/>
    <property type="match status" value="2"/>
</dbReference>
<dbReference type="InterPro" id="IPR011701">
    <property type="entry name" value="MFS"/>
</dbReference>
<dbReference type="InterPro" id="IPR036259">
    <property type="entry name" value="MFS_trans_sf"/>
</dbReference>
<dbReference type="PANTHER" id="PTHR23121">
    <property type="entry name" value="SODIUM-DEPENDENT GLUCOSE TRANSPORTER 1"/>
    <property type="match status" value="1"/>
</dbReference>
<dbReference type="PANTHER" id="PTHR23121:SF9">
    <property type="entry name" value="SODIUM-DEPENDENT GLUCOSE TRANSPORTER 1"/>
    <property type="match status" value="1"/>
</dbReference>
<dbReference type="Pfam" id="PF07690">
    <property type="entry name" value="MFS_1"/>
    <property type="match status" value="1"/>
</dbReference>
<dbReference type="SUPFAM" id="SSF103473">
    <property type="entry name" value="MFS general substrate transporter"/>
    <property type="match status" value="1"/>
</dbReference>
<evidence type="ECO:0000250" key="1"/>
<evidence type="ECO:0000250" key="2">
    <source>
        <dbReference type="UniProtKB" id="Q80T22"/>
    </source>
</evidence>
<evidence type="ECO:0000255" key="3"/>
<evidence type="ECO:0000256" key="4">
    <source>
        <dbReference type="SAM" id="MobiDB-lite"/>
    </source>
</evidence>
<evidence type="ECO:0000269" key="5">
    <source>
    </source>
</evidence>
<evidence type="ECO:0000305" key="6"/>
<evidence type="ECO:0000312" key="7">
    <source>
        <dbReference type="HGNC" id="HGNC:21053"/>
    </source>
</evidence>
<keyword id="KW-1003">Cell membrane</keyword>
<keyword id="KW-0406">Ion transport</keyword>
<keyword id="KW-0472">Membrane</keyword>
<keyword id="KW-1267">Proteomics identification</keyword>
<keyword id="KW-1185">Reference proteome</keyword>
<keyword id="KW-0915">Sodium</keyword>
<keyword id="KW-0739">Sodium transport</keyword>
<keyword id="KW-0762">Sugar transport</keyword>
<keyword id="KW-0769">Symport</keyword>
<keyword id="KW-0812">Transmembrane</keyword>
<keyword id="KW-1133">Transmembrane helix</keyword>
<keyword id="KW-0813">Transport</keyword>
<gene>
    <name evidence="7" type="primary">MFSD4B</name>
    <name type="synonym">KIAA1919</name>
    <name type="synonym">NAGLT1</name>
    <name type="ORF">HSPC100</name>
</gene>
<reference key="1">
    <citation type="journal article" date="2004" name="Nat. Genet.">
        <title>Complete sequencing and characterization of 21,243 full-length human cDNAs.</title>
        <authorList>
            <person name="Ota T."/>
            <person name="Suzuki Y."/>
            <person name="Nishikawa T."/>
            <person name="Otsuki T."/>
            <person name="Sugiyama T."/>
            <person name="Irie R."/>
            <person name="Wakamatsu A."/>
            <person name="Hayashi K."/>
            <person name="Sato H."/>
            <person name="Nagai K."/>
            <person name="Kimura K."/>
            <person name="Makita H."/>
            <person name="Sekine M."/>
            <person name="Obayashi M."/>
            <person name="Nishi T."/>
            <person name="Shibahara T."/>
            <person name="Tanaka T."/>
            <person name="Ishii S."/>
            <person name="Yamamoto J."/>
            <person name="Saito K."/>
            <person name="Kawai Y."/>
            <person name="Isono Y."/>
            <person name="Nakamura Y."/>
            <person name="Nagahari K."/>
            <person name="Murakami K."/>
            <person name="Yasuda T."/>
            <person name="Iwayanagi T."/>
            <person name="Wagatsuma M."/>
            <person name="Shiratori A."/>
            <person name="Sudo H."/>
            <person name="Hosoiri T."/>
            <person name="Kaku Y."/>
            <person name="Kodaira H."/>
            <person name="Kondo H."/>
            <person name="Sugawara M."/>
            <person name="Takahashi M."/>
            <person name="Kanda K."/>
            <person name="Yokoi T."/>
            <person name="Furuya T."/>
            <person name="Kikkawa E."/>
            <person name="Omura Y."/>
            <person name="Abe K."/>
            <person name="Kamihara K."/>
            <person name="Katsuta N."/>
            <person name="Sato K."/>
            <person name="Tanikawa M."/>
            <person name="Yamazaki M."/>
            <person name="Ninomiya K."/>
            <person name="Ishibashi T."/>
            <person name="Yamashita H."/>
            <person name="Murakawa K."/>
            <person name="Fujimori K."/>
            <person name="Tanai H."/>
            <person name="Kimata M."/>
            <person name="Watanabe M."/>
            <person name="Hiraoka S."/>
            <person name="Chiba Y."/>
            <person name="Ishida S."/>
            <person name="Ono Y."/>
            <person name="Takiguchi S."/>
            <person name="Watanabe S."/>
            <person name="Yosida M."/>
            <person name="Hotuta T."/>
            <person name="Kusano J."/>
            <person name="Kanehori K."/>
            <person name="Takahashi-Fujii A."/>
            <person name="Hara H."/>
            <person name="Tanase T.-O."/>
            <person name="Nomura Y."/>
            <person name="Togiya S."/>
            <person name="Komai F."/>
            <person name="Hara R."/>
            <person name="Takeuchi K."/>
            <person name="Arita M."/>
            <person name="Imose N."/>
            <person name="Musashino K."/>
            <person name="Yuuki H."/>
            <person name="Oshima A."/>
            <person name="Sasaki N."/>
            <person name="Aotsuka S."/>
            <person name="Yoshikawa Y."/>
            <person name="Matsunawa H."/>
            <person name="Ichihara T."/>
            <person name="Shiohata N."/>
            <person name="Sano S."/>
            <person name="Moriya S."/>
            <person name="Momiyama H."/>
            <person name="Satoh N."/>
            <person name="Takami S."/>
            <person name="Terashima Y."/>
            <person name="Suzuki O."/>
            <person name="Nakagawa S."/>
            <person name="Senoh A."/>
            <person name="Mizoguchi H."/>
            <person name="Goto Y."/>
            <person name="Shimizu F."/>
            <person name="Wakebe H."/>
            <person name="Hishigaki H."/>
            <person name="Watanabe T."/>
            <person name="Sugiyama A."/>
            <person name="Takemoto M."/>
            <person name="Kawakami B."/>
            <person name="Yamazaki M."/>
            <person name="Watanabe K."/>
            <person name="Kumagai A."/>
            <person name="Itakura S."/>
            <person name="Fukuzumi Y."/>
            <person name="Fujimori Y."/>
            <person name="Komiyama M."/>
            <person name="Tashiro H."/>
            <person name="Tanigami A."/>
            <person name="Fujiwara T."/>
            <person name="Ono T."/>
            <person name="Yamada K."/>
            <person name="Fujii Y."/>
            <person name="Ozaki K."/>
            <person name="Hirao M."/>
            <person name="Ohmori Y."/>
            <person name="Kawabata A."/>
            <person name="Hikiji T."/>
            <person name="Kobatake N."/>
            <person name="Inagaki H."/>
            <person name="Ikema Y."/>
            <person name="Okamoto S."/>
            <person name="Okitani R."/>
            <person name="Kawakami T."/>
            <person name="Noguchi S."/>
            <person name="Itoh T."/>
            <person name="Shigeta K."/>
            <person name="Senba T."/>
            <person name="Matsumura K."/>
            <person name="Nakajima Y."/>
            <person name="Mizuno T."/>
            <person name="Morinaga M."/>
            <person name="Sasaki M."/>
            <person name="Togashi T."/>
            <person name="Oyama M."/>
            <person name="Hata H."/>
            <person name="Watanabe M."/>
            <person name="Komatsu T."/>
            <person name="Mizushima-Sugano J."/>
            <person name="Satoh T."/>
            <person name="Shirai Y."/>
            <person name="Takahashi Y."/>
            <person name="Nakagawa K."/>
            <person name="Okumura K."/>
            <person name="Nagase T."/>
            <person name="Nomura N."/>
            <person name="Kikuchi H."/>
            <person name="Masuho Y."/>
            <person name="Yamashita R."/>
            <person name="Nakai K."/>
            <person name="Yada T."/>
            <person name="Nakamura Y."/>
            <person name="Ohara O."/>
            <person name="Isogai T."/>
            <person name="Sugano S."/>
        </authorList>
    </citation>
    <scope>NUCLEOTIDE SEQUENCE [LARGE SCALE MRNA]</scope>
    <source>
        <tissue>Kidney</tissue>
    </source>
</reference>
<reference key="2">
    <citation type="journal article" date="2003" name="Nature">
        <title>The DNA sequence and analysis of human chromosome 6.</title>
        <authorList>
            <person name="Mungall A.J."/>
            <person name="Palmer S.A."/>
            <person name="Sims S.K."/>
            <person name="Edwards C.A."/>
            <person name="Ashurst J.L."/>
            <person name="Wilming L."/>
            <person name="Jones M.C."/>
            <person name="Horton R."/>
            <person name="Hunt S.E."/>
            <person name="Scott C.E."/>
            <person name="Gilbert J.G.R."/>
            <person name="Clamp M.E."/>
            <person name="Bethel G."/>
            <person name="Milne S."/>
            <person name="Ainscough R."/>
            <person name="Almeida J.P."/>
            <person name="Ambrose K.D."/>
            <person name="Andrews T.D."/>
            <person name="Ashwell R.I.S."/>
            <person name="Babbage A.K."/>
            <person name="Bagguley C.L."/>
            <person name="Bailey J."/>
            <person name="Banerjee R."/>
            <person name="Barker D.J."/>
            <person name="Barlow K.F."/>
            <person name="Bates K."/>
            <person name="Beare D.M."/>
            <person name="Beasley H."/>
            <person name="Beasley O."/>
            <person name="Bird C.P."/>
            <person name="Blakey S.E."/>
            <person name="Bray-Allen S."/>
            <person name="Brook J."/>
            <person name="Brown A.J."/>
            <person name="Brown J.Y."/>
            <person name="Burford D.C."/>
            <person name="Burrill W."/>
            <person name="Burton J."/>
            <person name="Carder C."/>
            <person name="Carter N.P."/>
            <person name="Chapman J.C."/>
            <person name="Clark S.Y."/>
            <person name="Clark G."/>
            <person name="Clee C.M."/>
            <person name="Clegg S."/>
            <person name="Cobley V."/>
            <person name="Collier R.E."/>
            <person name="Collins J.E."/>
            <person name="Colman L.K."/>
            <person name="Corby N.R."/>
            <person name="Coville G.J."/>
            <person name="Culley K.M."/>
            <person name="Dhami P."/>
            <person name="Davies J."/>
            <person name="Dunn M."/>
            <person name="Earthrowl M.E."/>
            <person name="Ellington A.E."/>
            <person name="Evans K.A."/>
            <person name="Faulkner L."/>
            <person name="Francis M.D."/>
            <person name="Frankish A."/>
            <person name="Frankland J."/>
            <person name="French L."/>
            <person name="Garner P."/>
            <person name="Garnett J."/>
            <person name="Ghori M.J."/>
            <person name="Gilby L.M."/>
            <person name="Gillson C.J."/>
            <person name="Glithero R.J."/>
            <person name="Grafham D.V."/>
            <person name="Grant M."/>
            <person name="Gribble S."/>
            <person name="Griffiths C."/>
            <person name="Griffiths M.N.D."/>
            <person name="Hall R."/>
            <person name="Halls K.S."/>
            <person name="Hammond S."/>
            <person name="Harley J.L."/>
            <person name="Hart E.A."/>
            <person name="Heath P.D."/>
            <person name="Heathcott R."/>
            <person name="Holmes S.J."/>
            <person name="Howden P.J."/>
            <person name="Howe K.L."/>
            <person name="Howell G.R."/>
            <person name="Huckle E."/>
            <person name="Humphray S.J."/>
            <person name="Humphries M.D."/>
            <person name="Hunt A.R."/>
            <person name="Johnson C.M."/>
            <person name="Joy A.A."/>
            <person name="Kay M."/>
            <person name="Keenan S.J."/>
            <person name="Kimberley A.M."/>
            <person name="King A."/>
            <person name="Laird G.K."/>
            <person name="Langford C."/>
            <person name="Lawlor S."/>
            <person name="Leongamornlert D.A."/>
            <person name="Leversha M."/>
            <person name="Lloyd C.R."/>
            <person name="Lloyd D.M."/>
            <person name="Loveland J.E."/>
            <person name="Lovell J."/>
            <person name="Martin S."/>
            <person name="Mashreghi-Mohammadi M."/>
            <person name="Maslen G.L."/>
            <person name="Matthews L."/>
            <person name="McCann O.T."/>
            <person name="McLaren S.J."/>
            <person name="McLay K."/>
            <person name="McMurray A."/>
            <person name="Moore M.J.F."/>
            <person name="Mullikin J.C."/>
            <person name="Niblett D."/>
            <person name="Nickerson T."/>
            <person name="Novik K.L."/>
            <person name="Oliver K."/>
            <person name="Overton-Larty E.K."/>
            <person name="Parker A."/>
            <person name="Patel R."/>
            <person name="Pearce A.V."/>
            <person name="Peck A.I."/>
            <person name="Phillimore B.J.C.T."/>
            <person name="Phillips S."/>
            <person name="Plumb R.W."/>
            <person name="Porter K.M."/>
            <person name="Ramsey Y."/>
            <person name="Ranby S.A."/>
            <person name="Rice C.M."/>
            <person name="Ross M.T."/>
            <person name="Searle S.M."/>
            <person name="Sehra H.K."/>
            <person name="Sheridan E."/>
            <person name="Skuce C.D."/>
            <person name="Smith S."/>
            <person name="Smith M."/>
            <person name="Spraggon L."/>
            <person name="Squares S.L."/>
            <person name="Steward C.A."/>
            <person name="Sycamore N."/>
            <person name="Tamlyn-Hall G."/>
            <person name="Tester J."/>
            <person name="Theaker A.J."/>
            <person name="Thomas D.W."/>
            <person name="Thorpe A."/>
            <person name="Tracey A."/>
            <person name="Tromans A."/>
            <person name="Tubby B."/>
            <person name="Wall M."/>
            <person name="Wallis J.M."/>
            <person name="West A.P."/>
            <person name="White S.S."/>
            <person name="Whitehead S.L."/>
            <person name="Whittaker H."/>
            <person name="Wild A."/>
            <person name="Willey D.J."/>
            <person name="Wilmer T.E."/>
            <person name="Wood J.M."/>
            <person name="Wray P.W."/>
            <person name="Wyatt J.C."/>
            <person name="Young L."/>
            <person name="Younger R.M."/>
            <person name="Bentley D.R."/>
            <person name="Coulson A."/>
            <person name="Durbin R.M."/>
            <person name="Hubbard T."/>
            <person name="Sulston J.E."/>
            <person name="Dunham I."/>
            <person name="Rogers J."/>
            <person name="Beck S."/>
        </authorList>
    </citation>
    <scope>NUCLEOTIDE SEQUENCE [LARGE SCALE GENOMIC DNA]</scope>
</reference>
<reference key="3">
    <citation type="submission" date="2005-09" db="EMBL/GenBank/DDBJ databases">
        <authorList>
            <person name="Mural R.J."/>
            <person name="Istrail S."/>
            <person name="Sutton G.G."/>
            <person name="Florea L."/>
            <person name="Halpern A.L."/>
            <person name="Mobarry C.M."/>
            <person name="Lippert R."/>
            <person name="Walenz B."/>
            <person name="Shatkay H."/>
            <person name="Dew I."/>
            <person name="Miller J.R."/>
            <person name="Flanigan M.J."/>
            <person name="Edwards N.J."/>
            <person name="Bolanos R."/>
            <person name="Fasulo D."/>
            <person name="Halldorsson B.V."/>
            <person name="Hannenhalli S."/>
            <person name="Turner R."/>
            <person name="Yooseph S."/>
            <person name="Lu F."/>
            <person name="Nusskern D.R."/>
            <person name="Shue B.C."/>
            <person name="Zheng X.H."/>
            <person name="Zhong F."/>
            <person name="Delcher A.L."/>
            <person name="Huson D.H."/>
            <person name="Kravitz S.A."/>
            <person name="Mouchard L."/>
            <person name="Reinert K."/>
            <person name="Remington K.A."/>
            <person name="Clark A.G."/>
            <person name="Waterman M.S."/>
            <person name="Eichler E.E."/>
            <person name="Adams M.D."/>
            <person name="Hunkapiller M.W."/>
            <person name="Myers E.W."/>
            <person name="Venter J.C."/>
        </authorList>
    </citation>
    <scope>NUCLEOTIDE SEQUENCE [LARGE SCALE GENOMIC DNA]</scope>
</reference>
<reference key="4">
    <citation type="journal article" date="2004" name="Genome Res.">
        <title>The status, quality, and expansion of the NIH full-length cDNA project: the Mammalian Gene Collection (MGC).</title>
        <authorList>
            <consortium name="The MGC Project Team"/>
        </authorList>
    </citation>
    <scope>NUCLEOTIDE SEQUENCE [LARGE SCALE MRNA]</scope>
    <scope>VARIANT PRO-93</scope>
    <source>
        <tissue>Testis</tissue>
    </source>
</reference>
<reference key="5">
    <citation type="journal article" date="2001" name="DNA Res.">
        <title>Prediction of the coding sequences of unidentified human genes. XXI. The complete sequences of 60 new cDNA clones from brain which code for large proteins.</title>
        <authorList>
            <person name="Nagase T."/>
            <person name="Kikuno R."/>
            <person name="Ohara O."/>
        </authorList>
    </citation>
    <scope>NUCLEOTIDE SEQUENCE [LARGE SCALE MRNA] OF 116-518</scope>
    <source>
        <tissue>Brain</tissue>
    </source>
</reference>
<reference key="6">
    <citation type="submission" date="1999-05" db="EMBL/GenBank/DDBJ databases">
        <title>Human partial CDS cloned from CD34+ stem cells.</title>
        <authorList>
            <person name="Zhang Q.-H."/>
            <person name="Ye M."/>
            <person name="Zhou J."/>
            <person name="Shen Y."/>
            <person name="Wu X.-Y."/>
            <person name="Guan Z.Q."/>
            <person name="Wang L."/>
            <person name="Fan H.-Y."/>
            <person name="Mao Y.-F."/>
            <person name="Dai M."/>
            <person name="Huang Q.-H."/>
            <person name="Chen S.-J."/>
            <person name="Chen Z."/>
        </authorList>
    </citation>
    <scope>NUCLEOTIDE SEQUENCE [LARGE SCALE MRNA] OF 423-518</scope>
    <source>
        <tissue>Umbilical cord blood</tissue>
    </source>
</reference>
<name>MFS4B_HUMAN</name>
<comment type="function">
    <text evidence="2">May function as a sodium-dependent glucose transporter. Potential channels for urea in the inner medulla of kidney.</text>
</comment>
<comment type="interaction">
    <interactant intactId="EBI-11922631">
        <id>Q5TF39</id>
    </interactant>
    <interactant intactId="EBI-1058710">
        <id>O43169</id>
        <label>CYB5B</label>
    </interactant>
    <organismsDiffer>false</organismsDiffer>
    <experiments>3</experiments>
</comment>
<comment type="interaction">
    <interactant intactId="EBI-11922631">
        <id>Q5TF39</id>
    </interactant>
    <interactant intactId="EBI-12135455">
        <id>Q96PD2-2</id>
        <label>DCBLD2</label>
    </interactant>
    <organismsDiffer>false</organismsDiffer>
    <experiments>3</experiments>
</comment>
<comment type="interaction">
    <interactant intactId="EBI-11922631">
        <id>Q5TF39</id>
    </interactant>
    <interactant intactId="EBI-2858252">
        <id>Q6ZSS7</id>
        <label>MFSD6</label>
    </interactant>
    <organismsDiffer>false</organismsDiffer>
    <experiments>3</experiments>
</comment>
<comment type="interaction">
    <interactant intactId="EBI-11922631">
        <id>Q5TF39</id>
    </interactant>
    <interactant intactId="EBI-12190699">
        <id>Q6UX27-3</id>
        <label>VSTM1</label>
    </interactant>
    <organismsDiffer>false</organismsDiffer>
    <experiments>3</experiments>
</comment>
<comment type="subcellular location">
    <subcellularLocation>
        <location evidence="2">Apical cell membrane</location>
        <topology evidence="1">Multi-pass membrane protein</topology>
    </subcellularLocation>
</comment>
<comment type="similarity">
    <text evidence="6">Belongs to the major facilitator superfamily.</text>
</comment>
<accession>Q5TF39</accession>
<accession>A8K9M0</accession>
<accession>Q8IYB6</accession>
<accession>Q96PW9</accession>
<accession>Q9P0D6</accession>
<organism>
    <name type="scientific">Homo sapiens</name>
    <name type="common">Human</name>
    <dbReference type="NCBI Taxonomy" id="9606"/>
    <lineage>
        <taxon>Eukaryota</taxon>
        <taxon>Metazoa</taxon>
        <taxon>Chordata</taxon>
        <taxon>Craniata</taxon>
        <taxon>Vertebrata</taxon>
        <taxon>Euteleostomi</taxon>
        <taxon>Mammalia</taxon>
        <taxon>Eutheria</taxon>
        <taxon>Euarchontoglires</taxon>
        <taxon>Primates</taxon>
        <taxon>Haplorrhini</taxon>
        <taxon>Catarrhini</taxon>
        <taxon>Hominidae</taxon>
        <taxon>Homo</taxon>
    </lineage>
</organism>
<sequence>MLCASFLGLGLSVAIVGPTFQDLATNVNRNISSLSFIFVGRALGYLSGSVIGGFLVDVMNYFLLLGISMSATTVGLYLVPFCKTAILLTVMMSIFGVSIGILDTGGNVLILAIWGDKGAPHMQALHFSFALGAFLAPLLAKLALGPTASAENHTESDFHPALNQSSDADSEALFGVPNDKNLLWAYAVIGTYMFLVSVIFFCLFLKNSSKQEKARASAETFRRAKYHNALLCLLFLFFFFYVGAEVTYGSYVFSFATTHAGMKESEAAGLNSIFWGTFAACRGLAIFFATCLQPGTMIVLSNIGSLTSSLFLVLFDKNPICLWIATSVYGASMATTFPSGVSWIEQYTTIHGKSAAFFVIGASLGEMAIPAVIGILQGKYPDLPVVLYTSLGASIATGILFPVLYKLATSPLDRQRKEDRKSEDQKALLSSSGLNEYEEENEEEDAEKWNEMDFEMIETNDTMRHSIIETSRSSLTEPTAEVYNQYPSNALVFESSPFNTGSAHVKHLPETRTKGTNV</sequence>
<feature type="chain" id="PRO_0000294510" description="Sodium-dependent glucose transporter 1">
    <location>
        <begin position="1"/>
        <end position="518"/>
    </location>
</feature>
<feature type="transmembrane region" description="Helical" evidence="3">
    <location>
        <begin position="19"/>
        <end position="39"/>
    </location>
</feature>
<feature type="transmembrane region" description="Helical" evidence="3">
    <location>
        <begin position="53"/>
        <end position="73"/>
    </location>
</feature>
<feature type="transmembrane region" description="Helical" evidence="3">
    <location>
        <begin position="82"/>
        <end position="102"/>
    </location>
</feature>
<feature type="transmembrane region" description="Helical" evidence="3">
    <location>
        <begin position="107"/>
        <end position="127"/>
    </location>
</feature>
<feature type="transmembrane region" description="Helical" evidence="3">
    <location>
        <begin position="139"/>
        <end position="159"/>
    </location>
</feature>
<feature type="transmembrane region" description="Helical" evidence="3">
    <location>
        <begin position="221"/>
        <end position="241"/>
    </location>
</feature>
<feature type="transmembrane region" description="Helical" evidence="3">
    <location>
        <begin position="307"/>
        <end position="327"/>
    </location>
</feature>
<feature type="transmembrane region" description="Helical" evidence="3">
    <location>
        <begin position="347"/>
        <end position="367"/>
    </location>
</feature>
<feature type="transmembrane region" description="Helical" evidence="3">
    <location>
        <begin position="376"/>
        <end position="396"/>
    </location>
</feature>
<feature type="transmembrane region" description="Helical" evidence="3">
    <location>
        <begin position="400"/>
        <end position="420"/>
    </location>
</feature>
<feature type="transmembrane region" description="Helical" evidence="3">
    <location>
        <begin position="438"/>
        <end position="458"/>
    </location>
</feature>
<feature type="transmembrane region" description="Helical" evidence="3">
    <location>
        <begin position="466"/>
        <end position="486"/>
    </location>
</feature>
<feature type="region of interest" description="Disordered" evidence="4">
    <location>
        <begin position="414"/>
        <end position="448"/>
    </location>
</feature>
<feature type="compositionally biased region" description="Basic and acidic residues" evidence="4">
    <location>
        <begin position="414"/>
        <end position="426"/>
    </location>
</feature>
<feature type="compositionally biased region" description="Acidic residues" evidence="4">
    <location>
        <begin position="436"/>
        <end position="448"/>
    </location>
</feature>
<feature type="sequence variant" id="VAR_033192" description="In dbSNP:rs17853558." evidence="5">
    <original>S</original>
    <variation>P</variation>
    <location>
        <position position="93"/>
    </location>
</feature>
<proteinExistence type="evidence at protein level"/>
<protein>
    <recommendedName>
        <fullName evidence="2">Sodium-dependent glucose transporter 1</fullName>
    </recommendedName>
    <alternativeName>
        <fullName evidence="7">Major facilitator superfamily domain-containing protein 4B</fullName>
    </alternativeName>
</protein>